<protein>
    <recommendedName>
        <fullName evidence="1">3-hydroxyacyl-[acyl-carrier-protein] dehydratase FabZ</fullName>
        <ecNumber evidence="1">4.2.1.59</ecNumber>
    </recommendedName>
    <alternativeName>
        <fullName evidence="1">(3R)-hydroxymyristoyl-[acyl-carrier-protein] dehydratase</fullName>
        <shortName evidence="1">(3R)-hydroxymyristoyl-ACP dehydrase</shortName>
    </alternativeName>
    <alternativeName>
        <fullName evidence="1">Beta-hydroxyacyl-ACP dehydratase</fullName>
    </alternativeName>
</protein>
<reference key="1">
    <citation type="journal article" date="2009" name="Genome Res.">
        <title>Newly introduced genomic prophage islands are critical determinants of in vivo competitiveness in the Liverpool epidemic strain of Pseudomonas aeruginosa.</title>
        <authorList>
            <person name="Winstanley C."/>
            <person name="Langille M.G.I."/>
            <person name="Fothergill J.L."/>
            <person name="Kukavica-Ibrulj I."/>
            <person name="Paradis-Bleau C."/>
            <person name="Sanschagrin F."/>
            <person name="Thomson N.R."/>
            <person name="Winsor G.L."/>
            <person name="Quail M.A."/>
            <person name="Lennard N."/>
            <person name="Bignell A."/>
            <person name="Clarke L."/>
            <person name="Seeger K."/>
            <person name="Saunders D."/>
            <person name="Harris D."/>
            <person name="Parkhill J."/>
            <person name="Hancock R.E.W."/>
            <person name="Brinkman F.S.L."/>
            <person name="Levesque R.C."/>
        </authorList>
    </citation>
    <scope>NUCLEOTIDE SEQUENCE [LARGE SCALE GENOMIC DNA]</scope>
    <source>
        <strain>LESB58</strain>
    </source>
</reference>
<comment type="function">
    <text evidence="1">Involved in unsaturated fatty acids biosynthesis. Catalyzes the dehydration of short chain beta-hydroxyacyl-ACPs and long chain saturated and unsaturated beta-hydroxyacyl-ACPs.</text>
</comment>
<comment type="catalytic activity">
    <reaction evidence="1">
        <text>a (3R)-hydroxyacyl-[ACP] = a (2E)-enoyl-[ACP] + H2O</text>
        <dbReference type="Rhea" id="RHEA:13097"/>
        <dbReference type="Rhea" id="RHEA-COMP:9925"/>
        <dbReference type="Rhea" id="RHEA-COMP:9945"/>
        <dbReference type="ChEBI" id="CHEBI:15377"/>
        <dbReference type="ChEBI" id="CHEBI:78784"/>
        <dbReference type="ChEBI" id="CHEBI:78827"/>
        <dbReference type="EC" id="4.2.1.59"/>
    </reaction>
</comment>
<comment type="subcellular location">
    <subcellularLocation>
        <location evidence="1">Cytoplasm</location>
    </subcellularLocation>
</comment>
<comment type="similarity">
    <text evidence="1">Belongs to the thioester dehydratase family. FabZ subfamily.</text>
</comment>
<organism>
    <name type="scientific">Pseudomonas aeruginosa (strain LESB58)</name>
    <dbReference type="NCBI Taxonomy" id="557722"/>
    <lineage>
        <taxon>Bacteria</taxon>
        <taxon>Pseudomonadati</taxon>
        <taxon>Pseudomonadota</taxon>
        <taxon>Gammaproteobacteria</taxon>
        <taxon>Pseudomonadales</taxon>
        <taxon>Pseudomonadaceae</taxon>
        <taxon>Pseudomonas</taxon>
    </lineage>
</organism>
<dbReference type="EC" id="4.2.1.59" evidence="1"/>
<dbReference type="EMBL" id="FM209186">
    <property type="protein sequence ID" value="CAW26118.1"/>
    <property type="molecule type" value="Genomic_DNA"/>
</dbReference>
<dbReference type="RefSeq" id="WP_003092375.1">
    <property type="nucleotide sequence ID" value="NC_011770.1"/>
</dbReference>
<dbReference type="SMR" id="B7V7U3"/>
<dbReference type="GeneID" id="77219874"/>
<dbReference type="KEGG" id="pag:PLES_13901"/>
<dbReference type="HOGENOM" id="CLU_078912_1_0_6"/>
<dbReference type="GO" id="GO:0005737">
    <property type="term" value="C:cytoplasm"/>
    <property type="evidence" value="ECO:0007669"/>
    <property type="project" value="UniProtKB-SubCell"/>
</dbReference>
<dbReference type="GO" id="GO:0016020">
    <property type="term" value="C:membrane"/>
    <property type="evidence" value="ECO:0007669"/>
    <property type="project" value="GOC"/>
</dbReference>
<dbReference type="GO" id="GO:0019171">
    <property type="term" value="F:(3R)-hydroxyacyl-[acyl-carrier-protein] dehydratase activity"/>
    <property type="evidence" value="ECO:0007669"/>
    <property type="project" value="UniProtKB-EC"/>
</dbReference>
<dbReference type="GO" id="GO:0006633">
    <property type="term" value="P:fatty acid biosynthetic process"/>
    <property type="evidence" value="ECO:0007669"/>
    <property type="project" value="UniProtKB-UniRule"/>
</dbReference>
<dbReference type="GO" id="GO:0009245">
    <property type="term" value="P:lipid A biosynthetic process"/>
    <property type="evidence" value="ECO:0007669"/>
    <property type="project" value="UniProtKB-UniRule"/>
</dbReference>
<dbReference type="CDD" id="cd01288">
    <property type="entry name" value="FabZ"/>
    <property type="match status" value="1"/>
</dbReference>
<dbReference type="FunFam" id="3.10.129.10:FF:000001">
    <property type="entry name" value="3-hydroxyacyl-[acyl-carrier-protein] dehydratase FabZ"/>
    <property type="match status" value="1"/>
</dbReference>
<dbReference type="Gene3D" id="3.10.129.10">
    <property type="entry name" value="Hotdog Thioesterase"/>
    <property type="match status" value="1"/>
</dbReference>
<dbReference type="HAMAP" id="MF_00406">
    <property type="entry name" value="FabZ"/>
    <property type="match status" value="1"/>
</dbReference>
<dbReference type="InterPro" id="IPR013114">
    <property type="entry name" value="FabA_FabZ"/>
</dbReference>
<dbReference type="InterPro" id="IPR010084">
    <property type="entry name" value="FabZ"/>
</dbReference>
<dbReference type="InterPro" id="IPR029069">
    <property type="entry name" value="HotDog_dom_sf"/>
</dbReference>
<dbReference type="NCBIfam" id="TIGR01750">
    <property type="entry name" value="fabZ"/>
    <property type="match status" value="1"/>
</dbReference>
<dbReference type="NCBIfam" id="NF000582">
    <property type="entry name" value="PRK00006.1"/>
    <property type="match status" value="1"/>
</dbReference>
<dbReference type="PANTHER" id="PTHR30272">
    <property type="entry name" value="3-HYDROXYACYL-[ACYL-CARRIER-PROTEIN] DEHYDRATASE"/>
    <property type="match status" value="1"/>
</dbReference>
<dbReference type="PANTHER" id="PTHR30272:SF1">
    <property type="entry name" value="3-HYDROXYACYL-[ACYL-CARRIER-PROTEIN] DEHYDRATASE"/>
    <property type="match status" value="1"/>
</dbReference>
<dbReference type="Pfam" id="PF07977">
    <property type="entry name" value="FabA"/>
    <property type="match status" value="1"/>
</dbReference>
<dbReference type="SUPFAM" id="SSF54637">
    <property type="entry name" value="Thioesterase/thiol ester dehydrase-isomerase"/>
    <property type="match status" value="1"/>
</dbReference>
<name>FABZ_PSEA8</name>
<gene>
    <name evidence="1" type="primary">fabZ</name>
    <name type="ordered locus">PLES_13901</name>
</gene>
<evidence type="ECO:0000255" key="1">
    <source>
        <dbReference type="HAMAP-Rule" id="MF_00406"/>
    </source>
</evidence>
<proteinExistence type="inferred from homology"/>
<keyword id="KW-0963">Cytoplasm</keyword>
<keyword id="KW-0441">Lipid A biosynthesis</keyword>
<keyword id="KW-0444">Lipid biosynthesis</keyword>
<keyword id="KW-0443">Lipid metabolism</keyword>
<keyword id="KW-0456">Lyase</keyword>
<feature type="chain" id="PRO_1000123653" description="3-hydroxyacyl-[acyl-carrier-protein] dehydratase FabZ">
    <location>
        <begin position="1"/>
        <end position="146"/>
    </location>
</feature>
<feature type="active site" evidence="1">
    <location>
        <position position="49"/>
    </location>
</feature>
<sequence>MMDINEIREYLPHRYPFLLVDRVVELDIEGKRIRAYKNVSINEPFFNGHFPEHPIMPGVLIIEAMAQAAGILGFKMLDVKPADGTLYYFVGSDKLRFRQPVLPGDQLQLHAKFISVKRSIWKFDCHATVDDKPVCSAEIICAERKL</sequence>
<accession>B7V7U3</accession>